<protein>
    <recommendedName>
        <fullName>Envelope glycoprotein</fullName>
    </recommendedName>
    <alternativeName>
        <fullName>Env polyprotein</fullName>
    </alternativeName>
    <component>
        <recommendedName>
            <fullName>Surface protein</fullName>
            <shortName>SU</shortName>
        </recommendedName>
        <alternativeName>
            <fullName>Glycoprotein 70</fullName>
            <shortName>gp70</shortName>
        </alternativeName>
    </component>
</protein>
<keyword id="KW-0903">Direct protein sequencing</keyword>
<keyword id="KW-1015">Disulfide bond</keyword>
<keyword id="KW-1169">Fusion of virus membrane with host cell membrane</keyword>
<keyword id="KW-1168">Fusion of virus membrane with host membrane</keyword>
<keyword id="KW-0325">Glycoprotein</keyword>
<keyword id="KW-1032">Host cell membrane</keyword>
<keyword id="KW-1043">Host membrane</keyword>
<keyword id="KW-0945">Host-virus interaction</keyword>
<keyword id="KW-0472">Membrane</keyword>
<keyword id="KW-0479">Metal-binding</keyword>
<keyword id="KW-1161">Viral attachment to host cell</keyword>
<keyword id="KW-0261">Viral envelope protein</keyword>
<keyword id="KW-1162">Viral penetration into host cytoplasm</keyword>
<keyword id="KW-0946">Virion</keyword>
<keyword id="KW-1160">Virus entry into host cell</keyword>
<keyword id="KW-0862">Zinc</keyword>
<sequence>AAPGSSPHQVYNITWEVTNGDRETVWAISGNHPLWTWWPVLTPDLCMLALHGPPHWGLEYQAPYSSPPGPPCCSGSGGSSPGCSRDCNEPLTSLTPRCNTAWNRLKLDQVTHKSSEGFYVCPGSHRPREAKSCGGPDSFYCASWGCETTGRAYWKPSSSWDYITVDNNLTTNQAVQVCKDNKWCNPLAIQFTNAGRQVTSWITGHYWGLRLYVSGQDPGLTFGIRLKYQNLGPRVPIGPNPVLADQLSFPLPNPLPKPAKSPPVSNSTPTMISPSPTPTQPPPAGTGDRLLNLVQGAYQALNLTNPDKTQECWLCLVSGPPYYEGVAVLGTYSNHTSAPTNCSVASQHKLTLSEVTGRGLCIGTVPKTHQALCNTTLKTNKGSYYLVAPAGTTWACNTGLTPCLSATVLNRTTDYCVLVELWPRVTYHPPSYVYSQFEKSYRHKR</sequence>
<proteinExistence type="evidence at protein level"/>
<organism>
    <name type="scientific">Friend murine leukemia virus</name>
    <name type="common">FrMLV</name>
    <dbReference type="NCBI Taxonomy" id="11795"/>
    <lineage>
        <taxon>Viruses</taxon>
        <taxon>Riboviria</taxon>
        <taxon>Pararnavirae</taxon>
        <taxon>Artverviricota</taxon>
        <taxon>Revtraviricetes</taxon>
        <taxon>Ortervirales</taxon>
        <taxon>Retroviridae</taxon>
        <taxon>Orthoretrovirinae</taxon>
        <taxon>Gammaretrovirus</taxon>
        <taxon>Murine leukemia virus</taxon>
    </lineage>
</organism>
<organismHost>
    <name type="scientific">Mus musculus</name>
    <name type="common">Mouse</name>
    <dbReference type="NCBI Taxonomy" id="10090"/>
</organismHost>
<reference key="1">
    <citation type="journal article" date="1982" name="Proc. Natl. Acad. Sci. U.S.A.">
        <title>Complete amino acid sequence and glycosylation sites of glycoprotein gp71A of Friend murine leukemia virus.</title>
        <authorList>
            <person name="Chen R."/>
        </authorList>
    </citation>
    <scope>PROTEIN SEQUENCE</scope>
</reference>
<reference key="2">
    <citation type="journal article" date="1990" name="Eur. J. Biochem.">
        <title>Oligosaccharides at individual glycosylation sites in glycoprotein 71 of Friend murine leukemia virus.</title>
        <authorList>
            <person name="Geyer R."/>
            <person name="Dabrowski J."/>
            <person name="Dabrowski U."/>
            <person name="Linder D."/>
            <person name="Schlueter M."/>
            <person name="Schott H.-H."/>
            <person name="Stirm S."/>
        </authorList>
    </citation>
    <scope>GLYCOSYLATION AT ASN-12; ASN-168; ASN-266; THR-268; SER-273; SER-275; THR-277; THR-279; ASN-302; THR-304; THR-309; ASN-334; ASN-341; ASN-374 AND ASN-410</scope>
</reference>
<reference key="3">
    <citation type="journal article" date="1992" name="Eur. J. Biochem.">
        <title>Localization of the intrachain disulfide bonds of the envelope glycoprotein 71 from Friend murine leukemia virus.</title>
        <authorList>
            <person name="Linder M."/>
            <person name="Linder D."/>
            <person name="Hahnen J."/>
            <person name="Schott H.-H."/>
            <person name="Stirm S."/>
        </authorList>
    </citation>
    <scope>DISULFIDE BONDS</scope>
    <scope>SEQUENCE REVISION TO 184</scope>
</reference>
<accession>P03395</accession>
<evidence type="ECO:0000250" key="1"/>
<evidence type="ECO:0000255" key="2"/>
<evidence type="ECO:0000256" key="3">
    <source>
        <dbReference type="SAM" id="MobiDB-lite"/>
    </source>
</evidence>
<evidence type="ECO:0000269" key="4">
    <source>
    </source>
</evidence>
<evidence type="ECO:0000269" key="5">
    <source>
    </source>
</evidence>
<dbReference type="PIR" id="S20285">
    <property type="entry name" value="VCFMLV"/>
</dbReference>
<dbReference type="SMR" id="P03395"/>
<dbReference type="GlyConnect" id="315">
    <property type="glycosylation" value="50 N-Linked glycans (8 sites), 2 O-Linked glycans (7 sites)"/>
</dbReference>
<dbReference type="GlyCosmos" id="P03395">
    <property type="glycosylation" value="15 sites, 85 glycans"/>
</dbReference>
<dbReference type="iPTMnet" id="P03395"/>
<dbReference type="GO" id="GO:0020002">
    <property type="term" value="C:host cell plasma membrane"/>
    <property type="evidence" value="ECO:0007669"/>
    <property type="project" value="UniProtKB-SubCell"/>
</dbReference>
<dbReference type="GO" id="GO:0016020">
    <property type="term" value="C:membrane"/>
    <property type="evidence" value="ECO:0007669"/>
    <property type="project" value="UniProtKB-KW"/>
</dbReference>
<dbReference type="GO" id="GO:0019031">
    <property type="term" value="C:viral envelope"/>
    <property type="evidence" value="ECO:0007669"/>
    <property type="project" value="UniProtKB-KW"/>
</dbReference>
<dbReference type="GO" id="GO:0055036">
    <property type="term" value="C:virion membrane"/>
    <property type="evidence" value="ECO:0007669"/>
    <property type="project" value="UniProtKB-SubCell"/>
</dbReference>
<dbReference type="GO" id="GO:0046872">
    <property type="term" value="F:metal ion binding"/>
    <property type="evidence" value="ECO:0007669"/>
    <property type="project" value="UniProtKB-KW"/>
</dbReference>
<dbReference type="GO" id="GO:0019064">
    <property type="term" value="P:fusion of virus membrane with host plasma membrane"/>
    <property type="evidence" value="ECO:0007669"/>
    <property type="project" value="UniProtKB-KW"/>
</dbReference>
<dbReference type="GO" id="GO:0046718">
    <property type="term" value="P:symbiont entry into host cell"/>
    <property type="evidence" value="ECO:0007669"/>
    <property type="project" value="UniProtKB-KW"/>
</dbReference>
<dbReference type="GO" id="GO:0019062">
    <property type="term" value="P:virion attachment to host cell"/>
    <property type="evidence" value="ECO:0007669"/>
    <property type="project" value="UniProtKB-KW"/>
</dbReference>
<dbReference type="Gene3D" id="3.90.310.10">
    <property type="entry name" value="ENV polyprotein, receptor-binding domain"/>
    <property type="match status" value="1"/>
</dbReference>
<dbReference type="InterPro" id="IPR008981">
    <property type="entry name" value="FMuLV_rcpt-bd"/>
</dbReference>
<dbReference type="InterPro" id="IPR018154">
    <property type="entry name" value="TLV/ENV_coat_polyprotein"/>
</dbReference>
<dbReference type="PANTHER" id="PTHR10424:SF72">
    <property type="entry name" value="BC035947 PROTEIN-RELATED"/>
    <property type="match status" value="1"/>
</dbReference>
<dbReference type="PANTHER" id="PTHR10424">
    <property type="entry name" value="VIRAL ENVELOPE PROTEIN"/>
    <property type="match status" value="1"/>
</dbReference>
<dbReference type="Pfam" id="PF00429">
    <property type="entry name" value="TLV_coat"/>
    <property type="match status" value="1"/>
</dbReference>
<dbReference type="SUPFAM" id="SSF49830">
    <property type="entry name" value="ENV polyprotein, receptor-binding domain"/>
    <property type="match status" value="1"/>
</dbReference>
<gene>
    <name type="primary">env</name>
</gene>
<name>ENV_MLVFR</name>
<feature type="chain" id="PRO_0000239584" description="Envelope glycoprotein">
    <location>
        <begin position="1" status="less than"/>
        <end position="445" status="greater than"/>
    </location>
</feature>
<feature type="chain" id="PRO_0000125471" description="Surface protein" evidence="1">
    <location>
        <begin position="1"/>
        <end position="445"/>
    </location>
</feature>
<feature type="topological domain" description="Extracellular" evidence="2">
    <location>
        <begin position="1"/>
        <end position="445" status="greater than"/>
    </location>
</feature>
<feature type="region of interest" description="Disordered" evidence="3">
    <location>
        <begin position="253"/>
        <end position="286"/>
    </location>
</feature>
<feature type="short sequence motif" description="CXXC">
    <location>
        <begin position="312"/>
        <end position="315"/>
    </location>
</feature>
<feature type="compositionally biased region" description="Low complexity" evidence="3">
    <location>
        <begin position="262"/>
        <end position="274"/>
    </location>
</feature>
<feature type="compositionally biased region" description="Pro residues" evidence="3">
    <location>
        <begin position="275"/>
        <end position="284"/>
    </location>
</feature>
<feature type="binding site" evidence="1">
    <location>
        <position position="55"/>
    </location>
    <ligand>
        <name>Zn(2+)</name>
        <dbReference type="ChEBI" id="CHEBI:29105"/>
    </ligand>
</feature>
<feature type="binding site" evidence="1">
    <location>
        <position position="86"/>
    </location>
    <ligand>
        <name>Zn(2+)</name>
        <dbReference type="ChEBI" id="CHEBI:29105"/>
    </ligand>
</feature>
<feature type="glycosylation site" id="CAR_000083" description="N-linked (GlcNAc...) (hybrid) asparagine; by host" evidence="5">
    <location>
        <position position="12"/>
    </location>
</feature>
<feature type="glycosylation site" id="CAR_000084" description="N-linked (GlcNAc...) (high mannose) asparagine; by host" evidence="5">
    <location>
        <position position="168"/>
    </location>
</feature>
<feature type="glycosylation site" id="CAR_000085" description="N-linked (GlcNAc...) (polylactosaminoglycan) asparagine; by host" evidence="5">
    <location>
        <position position="266"/>
    </location>
</feature>
<feature type="glycosylation site" id="CAR_000086" description="O-linked (GalNAc...) threonine; by host" evidence="5">
    <location>
        <position position="268"/>
    </location>
</feature>
<feature type="glycosylation site" id="CAR_000087" description="O-linked (GalNAc...) serine; by host" evidence="5">
    <location>
        <position position="273"/>
    </location>
</feature>
<feature type="glycosylation site" id="CAR_000088" description="O-linked (GalNAc...) serine; by host" evidence="5">
    <location>
        <position position="275"/>
    </location>
</feature>
<feature type="glycosylation site" id="CAR_000089" description="O-linked (GalNAc...) threonine; by host" evidence="5">
    <location>
        <position position="277"/>
    </location>
</feature>
<feature type="glycosylation site" id="CAR_000090" description="O-linked (GalNAc...) threonine; by host" evidence="5">
    <location>
        <position position="279"/>
    </location>
</feature>
<feature type="glycosylation site" id="CAR_000091" description="N-linked (GlcNAc...) (polylactosaminoglycan) asparagine; by host" evidence="5">
    <location>
        <position position="302"/>
    </location>
</feature>
<feature type="glycosylation site" id="CAR_000092" description="O-linked (GalNAc...) threonine; by host" evidence="5">
    <location>
        <position position="304"/>
    </location>
</feature>
<feature type="glycosylation site" id="CAR_000093" description="O-linked (GalNAc...) threonine; by host" evidence="5">
    <location>
        <position position="309"/>
    </location>
</feature>
<feature type="glycosylation site" description="N-linked (GlcNAc...) (high mannose) asparagine; by host; alternate" evidence="5">
    <location>
        <position position="334"/>
    </location>
</feature>
<feature type="glycosylation site" description="N-linked (GlcNAc...) (hybrid) asparagine; by host; alternate" evidence="5">
    <location>
        <position position="334"/>
    </location>
</feature>
<feature type="glycosylation site" description="N-linked (GlcNAc...) (polylactosaminoglycan) asparagine; by host; alternate" evidence="5">
    <location>
        <position position="334"/>
    </location>
</feature>
<feature type="glycosylation site" description="N-linked (GlcNAc...) (high mannose) asparagine; by host; alternate" evidence="5">
    <location>
        <position position="341"/>
    </location>
</feature>
<feature type="glycosylation site" description="N-linked (GlcNAc...) (hybrid) asparagine; by host; alternate" evidence="5">
    <location>
        <position position="341"/>
    </location>
</feature>
<feature type="glycosylation site" description="N-linked (GlcNAc...) (polylactosaminoglycan) asparagine; by host; alternate" evidence="5">
    <location>
        <position position="341"/>
    </location>
</feature>
<feature type="glycosylation site" id="CAR_000096" description="N-linked (GlcNAc...) (polylactosaminoglycan) asparagine; by host" evidence="5">
    <location>
        <position position="374"/>
    </location>
</feature>
<feature type="glycosylation site" description="N-linked (GlcNAc...) (high mannose) asparagine; by host; alternate" evidence="5">
    <location>
        <position position="410"/>
    </location>
</feature>
<feature type="glycosylation site" description="N-linked (GlcNAc...) (polylactosaminoglycan) asparagine; by host; alternate" evidence="5">
    <location>
        <position position="410"/>
    </location>
</feature>
<feature type="disulfide bond" evidence="4">
    <location>
        <begin position="46"/>
        <end position="98"/>
    </location>
</feature>
<feature type="disulfide bond" evidence="4">
    <location>
        <begin position="72"/>
        <end position="87"/>
    </location>
</feature>
<feature type="disulfide bond" evidence="4">
    <location>
        <begin position="73"/>
        <end position="83"/>
    </location>
</feature>
<feature type="disulfide bond" evidence="4">
    <location>
        <begin position="121"/>
        <end position="141"/>
    </location>
</feature>
<feature type="disulfide bond" evidence="4">
    <location>
        <begin position="133"/>
        <end position="146"/>
    </location>
</feature>
<feature type="disulfide bond" evidence="4">
    <location>
        <begin position="178"/>
        <end position="184"/>
    </location>
</feature>
<feature type="disulfide bond" evidence="4">
    <location>
        <begin position="312"/>
        <end position="315"/>
    </location>
</feature>
<feature type="disulfide bond" evidence="4">
    <location>
        <begin position="342"/>
        <end position="396"/>
    </location>
</feature>
<feature type="disulfide bond" evidence="4">
    <location>
        <begin position="361"/>
        <end position="373"/>
    </location>
</feature>
<feature type="disulfide bond" evidence="4">
    <location>
        <begin position="403"/>
        <end position="416"/>
    </location>
</feature>
<feature type="non-terminal residue">
    <location>
        <position position="1"/>
    </location>
</feature>
<feature type="non-terminal residue">
    <location>
        <position position="445"/>
    </location>
</feature>
<comment type="function">
    <text evidence="1">The surface protein (SU) attaches the virus to the host cell by binding to its receptor. This interaction triggers the refolding of the transmembrane protein (TM) and is thought to activate its fusogenic potential by unmasking its fusion peptide. Fusion occurs at the host cell plasma membrane (By similarity).</text>
</comment>
<comment type="subunit">
    <text evidence="1">The mature envelope protein (Env) consists of a trimer of SU-TM heterodimers attached by a labile interchain disulfide bond.</text>
</comment>
<comment type="subcellular location">
    <molecule>Surface protein</molecule>
    <subcellularLocation>
        <location>Virion membrane</location>
        <topology>Peripheral membrane protein</topology>
    </subcellularLocation>
    <subcellularLocation>
        <location>Host cell membrane</location>
        <topology>Peripheral membrane protein</topology>
    </subcellularLocation>
    <text evidence="1">The surface protein is not anchored to the viral envelope, but associates with the virion surface through its binding to TM.</text>
</comment>
<comment type="PTM">
    <text evidence="1">Specific enzymatic cleavages in vivo yield mature proteins. Envelope glycoproteins are synthesized as an inactive precursor that is N-glycosylated and processed likely by host cell furin or by a furin-like protease in the Golgi to yield the mature SU and TM proteins. The cleavage site between SU and TM requires the minimal sequence [KR]-X-[KR]-R (By similarity).</text>
</comment>